<feature type="signal peptide" evidence="1">
    <location>
        <begin position="1"/>
        <end position="25"/>
    </location>
</feature>
<feature type="chain" id="PRO_0000310840" description="DSC E3 ubiquitin ligase complex subunit 1">
    <location>
        <begin position="26"/>
        <end position="695"/>
    </location>
</feature>
<feature type="topological domain" description="Lumenal" evidence="1">
    <location>
        <begin position="26"/>
        <end position="319"/>
    </location>
</feature>
<feature type="transmembrane region" description="Helical" evidence="1">
    <location>
        <begin position="320"/>
        <end position="340"/>
    </location>
</feature>
<feature type="topological domain" description="Cytoplasmic" evidence="1">
    <location>
        <begin position="341"/>
        <end position="353"/>
    </location>
</feature>
<feature type="transmembrane region" description="Helical" evidence="1">
    <location>
        <begin position="354"/>
        <end position="374"/>
    </location>
</feature>
<feature type="topological domain" description="Lumenal" evidence="1">
    <location>
        <begin position="375"/>
        <end position="382"/>
    </location>
</feature>
<feature type="transmembrane region" description="Helical" evidence="1">
    <location>
        <begin position="383"/>
        <end position="403"/>
    </location>
</feature>
<feature type="topological domain" description="Cytoplasmic" evidence="1">
    <location>
        <begin position="404"/>
        <end position="486"/>
    </location>
</feature>
<feature type="transmembrane region" description="Helical" evidence="1">
    <location>
        <begin position="487"/>
        <end position="507"/>
    </location>
</feature>
<feature type="topological domain" description="Lumenal" evidence="1">
    <location>
        <begin position="508"/>
        <end position="509"/>
    </location>
</feature>
<feature type="transmembrane region" description="Helical" evidence="1">
    <location>
        <begin position="510"/>
        <end position="530"/>
    </location>
</feature>
<feature type="topological domain" description="Cytoplasmic" evidence="1">
    <location>
        <begin position="531"/>
        <end position="540"/>
    </location>
</feature>
<feature type="transmembrane region" description="Helical" evidence="1">
    <location>
        <begin position="541"/>
        <end position="561"/>
    </location>
</feature>
<feature type="topological domain" description="Lumenal" evidence="1">
    <location>
        <begin position="562"/>
        <end position="572"/>
    </location>
</feature>
<feature type="transmembrane region" description="Helical" evidence="1">
    <location>
        <begin position="573"/>
        <end position="593"/>
    </location>
</feature>
<feature type="topological domain" description="Cytoplasmic" evidence="1">
    <location>
        <begin position="594"/>
        <end position="695"/>
    </location>
</feature>
<feature type="zinc finger region" description="RING-type; atypical" evidence="2">
    <location>
        <begin position="634"/>
        <end position="689"/>
    </location>
</feature>
<feature type="region of interest" description="Disordered" evidence="3">
    <location>
        <begin position="419"/>
        <end position="473"/>
    </location>
</feature>
<feature type="compositionally biased region" description="Low complexity" evidence="3">
    <location>
        <begin position="427"/>
        <end position="454"/>
    </location>
</feature>
<feature type="mutagenesis site" description="Results in defective proteolytic cleavage of sre1 but restores its precursor levels; when associated with a rbd2 knockout mutant." evidence="5">
    <original>C</original>
    <variation>A</variation>
    <location>
        <position position="634"/>
    </location>
</feature>
<accession>O43085</accession>
<dbReference type="EC" id="2.3.2.27" evidence="6"/>
<dbReference type="EMBL" id="CU329671">
    <property type="protein sequence ID" value="CAA17038.2"/>
    <property type="molecule type" value="Genomic_DNA"/>
</dbReference>
<dbReference type="PIR" id="T40772">
    <property type="entry name" value="T40772"/>
</dbReference>
<dbReference type="RefSeq" id="NP_595266.2">
    <property type="nucleotide sequence ID" value="NM_001021173.2"/>
</dbReference>
<dbReference type="SMR" id="O43085"/>
<dbReference type="BioGRID" id="277765">
    <property type="interactions" value="301"/>
</dbReference>
<dbReference type="FunCoup" id="O43085">
    <property type="interactions" value="40"/>
</dbReference>
<dbReference type="STRING" id="284812.O43085"/>
<dbReference type="iPTMnet" id="O43085"/>
<dbReference type="SwissPalm" id="O43085"/>
<dbReference type="PaxDb" id="4896-SPBC947.10.1"/>
<dbReference type="EnsemblFungi" id="SPBC947.10.1">
    <property type="protein sequence ID" value="SPBC947.10.1:pep"/>
    <property type="gene ID" value="SPBC947.10"/>
</dbReference>
<dbReference type="GeneID" id="2541251"/>
<dbReference type="KEGG" id="spo:2541251"/>
<dbReference type="PomBase" id="SPBC947.10">
    <property type="gene designation" value="dsc1"/>
</dbReference>
<dbReference type="VEuPathDB" id="FungiDB:SPBC947.10"/>
<dbReference type="eggNOG" id="KOG0828">
    <property type="taxonomic scope" value="Eukaryota"/>
</dbReference>
<dbReference type="HOGENOM" id="CLU_010475_1_0_1"/>
<dbReference type="InParanoid" id="O43085"/>
<dbReference type="OMA" id="MLTPCHH"/>
<dbReference type="UniPathway" id="UPA00143"/>
<dbReference type="PRO" id="PR:O43085"/>
<dbReference type="Proteomes" id="UP000002485">
    <property type="component" value="Chromosome II"/>
</dbReference>
<dbReference type="GO" id="GO:0044695">
    <property type="term" value="C:Dsc E3 ubiquitin ligase complex"/>
    <property type="evidence" value="ECO:0000314"/>
    <property type="project" value="PomBase"/>
</dbReference>
<dbReference type="GO" id="GO:0012505">
    <property type="term" value="C:endomembrane system"/>
    <property type="evidence" value="ECO:0000318"/>
    <property type="project" value="GO_Central"/>
</dbReference>
<dbReference type="GO" id="GO:0005783">
    <property type="term" value="C:endoplasmic reticulum"/>
    <property type="evidence" value="ECO:0007005"/>
    <property type="project" value="PomBase"/>
</dbReference>
<dbReference type="GO" id="GO:0005789">
    <property type="term" value="C:endoplasmic reticulum membrane"/>
    <property type="evidence" value="ECO:0007669"/>
    <property type="project" value="UniProtKB-SubCell"/>
</dbReference>
<dbReference type="GO" id="GO:0005794">
    <property type="term" value="C:Golgi apparatus"/>
    <property type="evidence" value="ECO:0000266"/>
    <property type="project" value="PomBase"/>
</dbReference>
<dbReference type="GO" id="GO:0000139">
    <property type="term" value="C:Golgi membrane"/>
    <property type="evidence" value="ECO:0007669"/>
    <property type="project" value="UniProtKB-SubCell"/>
</dbReference>
<dbReference type="GO" id="GO:0061630">
    <property type="term" value="F:ubiquitin protein ligase activity"/>
    <property type="evidence" value="ECO:0000314"/>
    <property type="project" value="PomBase"/>
</dbReference>
<dbReference type="GO" id="GO:0008270">
    <property type="term" value="F:zinc ion binding"/>
    <property type="evidence" value="ECO:0000255"/>
    <property type="project" value="PomBase"/>
</dbReference>
<dbReference type="GO" id="GO:0043161">
    <property type="term" value="P:proteasome-mediated ubiquitin-dependent protein catabolic process"/>
    <property type="evidence" value="ECO:0000315"/>
    <property type="project" value="PomBase"/>
</dbReference>
<dbReference type="GO" id="GO:0016567">
    <property type="term" value="P:protein ubiquitination"/>
    <property type="evidence" value="ECO:0007669"/>
    <property type="project" value="UniProtKB-UniPathway"/>
</dbReference>
<dbReference type="GO" id="GO:0032933">
    <property type="term" value="P:SREBP signaling pathway"/>
    <property type="evidence" value="ECO:0000315"/>
    <property type="project" value="PomBase"/>
</dbReference>
<dbReference type="GO" id="GO:0043162">
    <property type="term" value="P:ubiquitin-dependent protein catabolic process via the multivesicular body sorting pathway"/>
    <property type="evidence" value="ECO:0000266"/>
    <property type="project" value="PomBase"/>
</dbReference>
<dbReference type="CDD" id="cd23117">
    <property type="entry name" value="RING-H2_TUL1-like"/>
    <property type="match status" value="1"/>
</dbReference>
<dbReference type="FunFam" id="3.30.40.10:FF:001167">
    <property type="entry name" value="DSC E3 ubiquitin ligase complex subunit 1"/>
    <property type="match status" value="1"/>
</dbReference>
<dbReference type="Gene3D" id="3.30.40.10">
    <property type="entry name" value="Zinc/RING finger domain, C3HC4 (zinc finger)"/>
    <property type="match status" value="1"/>
</dbReference>
<dbReference type="InterPro" id="IPR021319">
    <property type="entry name" value="DUF2921"/>
</dbReference>
<dbReference type="InterPro" id="IPR050731">
    <property type="entry name" value="HRD1_E3_ubiq-ligases"/>
</dbReference>
<dbReference type="InterPro" id="IPR001841">
    <property type="entry name" value="Znf_RING"/>
</dbReference>
<dbReference type="InterPro" id="IPR013083">
    <property type="entry name" value="Znf_RING/FYVE/PHD"/>
</dbReference>
<dbReference type="InterPro" id="IPR024766">
    <property type="entry name" value="Znf_RING_H2"/>
</dbReference>
<dbReference type="PANTHER" id="PTHR22763">
    <property type="entry name" value="RING ZINC FINGER PROTEIN"/>
    <property type="match status" value="1"/>
</dbReference>
<dbReference type="PANTHER" id="PTHR22763:SF162">
    <property type="entry name" value="TRANSMEMBRANE E3 UBIQUITIN-PROTEIN LIGASE 1"/>
    <property type="match status" value="1"/>
</dbReference>
<dbReference type="Pfam" id="PF11145">
    <property type="entry name" value="DUF2921"/>
    <property type="match status" value="2"/>
</dbReference>
<dbReference type="Pfam" id="PF12678">
    <property type="entry name" value="zf-rbx1"/>
    <property type="match status" value="1"/>
</dbReference>
<dbReference type="SMART" id="SM00184">
    <property type="entry name" value="RING"/>
    <property type="match status" value="1"/>
</dbReference>
<dbReference type="SUPFAM" id="SSF57850">
    <property type="entry name" value="RING/U-box"/>
    <property type="match status" value="1"/>
</dbReference>
<dbReference type="PROSITE" id="PS50089">
    <property type="entry name" value="ZF_RING_2"/>
    <property type="match status" value="1"/>
</dbReference>
<gene>
    <name type="primary">dsc1</name>
    <name type="ORF">SPBC947.10</name>
</gene>
<organism>
    <name type="scientific">Schizosaccharomyces pombe (strain 972 / ATCC 24843)</name>
    <name type="common">Fission yeast</name>
    <dbReference type="NCBI Taxonomy" id="284812"/>
    <lineage>
        <taxon>Eukaryota</taxon>
        <taxon>Fungi</taxon>
        <taxon>Dikarya</taxon>
        <taxon>Ascomycota</taxon>
        <taxon>Taphrinomycotina</taxon>
        <taxon>Schizosaccharomycetes</taxon>
        <taxon>Schizosaccharomycetales</taxon>
        <taxon>Schizosaccharomycetaceae</taxon>
        <taxon>Schizosaccharomyces</taxon>
    </lineage>
</organism>
<keyword id="KW-0256">Endoplasmic reticulum</keyword>
<keyword id="KW-0333">Golgi apparatus</keyword>
<keyword id="KW-0472">Membrane</keyword>
<keyword id="KW-0479">Metal-binding</keyword>
<keyword id="KW-1185">Reference proteome</keyword>
<keyword id="KW-0732">Signal</keyword>
<keyword id="KW-0808">Transferase</keyword>
<keyword id="KW-0812">Transmembrane</keyword>
<keyword id="KW-1133">Transmembrane helix</keyword>
<keyword id="KW-0833">Ubl conjugation pathway</keyword>
<keyword id="KW-0862">Zinc</keyword>
<keyword id="KW-0863">Zinc-finger</keyword>
<comment type="function">
    <text evidence="4 5">Catalytic component of the DSC E3 ubiquitin ligase complex which is required for the sre1 transcriptional activator proteolytic cleavage to release the soluble transcription factor from the membrane in low oxygen or sterol conditions (PubMed:21504829, PubMed:27655872). The complex also plays an important role in the multivesicular body (MVB) pathway and functions in a post-endoplasmic reticulum pathway for protein degradation (PubMed:21504829).</text>
</comment>
<comment type="catalytic activity">
    <reaction evidence="6">
        <text>S-ubiquitinyl-[E2 ubiquitin-conjugating enzyme]-L-cysteine + [acceptor protein]-L-lysine = [E2 ubiquitin-conjugating enzyme]-L-cysteine + N(6)-ubiquitinyl-[acceptor protein]-L-lysine.</text>
        <dbReference type="EC" id="2.3.2.27"/>
    </reaction>
</comment>
<comment type="pathway">
    <text>Protein modification; protein ubiquitination.</text>
</comment>
<comment type="subunit">
    <text evidence="4">Component of the DSC E3 ubiquitin ligase complex composed of dsc1, dsc2, dsc3 and dsc4.</text>
</comment>
<comment type="subcellular location">
    <subcellularLocation>
        <location>Endoplasmic reticulum membrane</location>
        <topology>Multi-pass membrane protein</topology>
    </subcellularLocation>
    <subcellularLocation>
        <location>Golgi apparatus membrane</location>
        <topology>Multi-pass membrane protein</topology>
    </subcellularLocation>
</comment>
<comment type="disruption phenotype">
    <text evidence="5">Lack of proteolytic cleavage of sterol regulatory element-binding protein sre1 (PubMed:27655872). Simultaneous knockout of rbd2, results in defective proteolytic cleavage of sre1 but restores its precursor levels (PubMed:27655872).</text>
</comment>
<reference key="1">
    <citation type="journal article" date="2002" name="Nature">
        <title>The genome sequence of Schizosaccharomyces pombe.</title>
        <authorList>
            <person name="Wood V."/>
            <person name="Gwilliam R."/>
            <person name="Rajandream M.A."/>
            <person name="Lyne M.H."/>
            <person name="Lyne R."/>
            <person name="Stewart A."/>
            <person name="Sgouros J.G."/>
            <person name="Peat N."/>
            <person name="Hayles J."/>
            <person name="Baker S.G."/>
            <person name="Basham D."/>
            <person name="Bowman S."/>
            <person name="Brooks K."/>
            <person name="Brown D."/>
            <person name="Brown S."/>
            <person name="Chillingworth T."/>
            <person name="Churcher C.M."/>
            <person name="Collins M."/>
            <person name="Connor R."/>
            <person name="Cronin A."/>
            <person name="Davis P."/>
            <person name="Feltwell T."/>
            <person name="Fraser A."/>
            <person name="Gentles S."/>
            <person name="Goble A."/>
            <person name="Hamlin N."/>
            <person name="Harris D.E."/>
            <person name="Hidalgo J."/>
            <person name="Hodgson G."/>
            <person name="Holroyd S."/>
            <person name="Hornsby T."/>
            <person name="Howarth S."/>
            <person name="Huckle E.J."/>
            <person name="Hunt S."/>
            <person name="Jagels K."/>
            <person name="James K.D."/>
            <person name="Jones L."/>
            <person name="Jones M."/>
            <person name="Leather S."/>
            <person name="McDonald S."/>
            <person name="McLean J."/>
            <person name="Mooney P."/>
            <person name="Moule S."/>
            <person name="Mungall K.L."/>
            <person name="Murphy L.D."/>
            <person name="Niblett D."/>
            <person name="Odell C."/>
            <person name="Oliver K."/>
            <person name="O'Neil S."/>
            <person name="Pearson D."/>
            <person name="Quail M.A."/>
            <person name="Rabbinowitsch E."/>
            <person name="Rutherford K.M."/>
            <person name="Rutter S."/>
            <person name="Saunders D."/>
            <person name="Seeger K."/>
            <person name="Sharp S."/>
            <person name="Skelton J."/>
            <person name="Simmonds M.N."/>
            <person name="Squares R."/>
            <person name="Squares S."/>
            <person name="Stevens K."/>
            <person name="Taylor K."/>
            <person name="Taylor R.G."/>
            <person name="Tivey A."/>
            <person name="Walsh S.V."/>
            <person name="Warren T."/>
            <person name="Whitehead S."/>
            <person name="Woodward J.R."/>
            <person name="Volckaert G."/>
            <person name="Aert R."/>
            <person name="Robben J."/>
            <person name="Grymonprez B."/>
            <person name="Weltjens I."/>
            <person name="Vanstreels E."/>
            <person name="Rieger M."/>
            <person name="Schaefer M."/>
            <person name="Mueller-Auer S."/>
            <person name="Gabel C."/>
            <person name="Fuchs M."/>
            <person name="Duesterhoeft A."/>
            <person name="Fritzc C."/>
            <person name="Holzer E."/>
            <person name="Moestl D."/>
            <person name="Hilbert H."/>
            <person name="Borzym K."/>
            <person name="Langer I."/>
            <person name="Beck A."/>
            <person name="Lehrach H."/>
            <person name="Reinhardt R."/>
            <person name="Pohl T.M."/>
            <person name="Eger P."/>
            <person name="Zimmermann W."/>
            <person name="Wedler H."/>
            <person name="Wambutt R."/>
            <person name="Purnelle B."/>
            <person name="Goffeau A."/>
            <person name="Cadieu E."/>
            <person name="Dreano S."/>
            <person name="Gloux S."/>
            <person name="Lelaure V."/>
            <person name="Mottier S."/>
            <person name="Galibert F."/>
            <person name="Aves S.J."/>
            <person name="Xiang Z."/>
            <person name="Hunt C."/>
            <person name="Moore K."/>
            <person name="Hurst S.M."/>
            <person name="Lucas M."/>
            <person name="Rochet M."/>
            <person name="Gaillardin C."/>
            <person name="Tallada V.A."/>
            <person name="Garzon A."/>
            <person name="Thode G."/>
            <person name="Daga R.R."/>
            <person name="Cruzado L."/>
            <person name="Jimenez J."/>
            <person name="Sanchez M."/>
            <person name="del Rey F."/>
            <person name="Benito J."/>
            <person name="Dominguez A."/>
            <person name="Revuelta J.L."/>
            <person name="Moreno S."/>
            <person name="Armstrong J."/>
            <person name="Forsburg S.L."/>
            <person name="Cerutti L."/>
            <person name="Lowe T."/>
            <person name="McCombie W.R."/>
            <person name="Paulsen I."/>
            <person name="Potashkin J."/>
            <person name="Shpakovski G.V."/>
            <person name="Ussery D."/>
            <person name="Barrell B.G."/>
            <person name="Nurse P."/>
        </authorList>
    </citation>
    <scope>NUCLEOTIDE SEQUENCE [LARGE SCALE GENOMIC DNA]</scope>
    <source>
        <strain>972 / ATCC 24843</strain>
    </source>
</reference>
<reference key="2">
    <citation type="journal article" date="2011" name="Science">
        <title>Comparative functional genomics of the fission yeasts.</title>
        <authorList>
            <person name="Rhind N."/>
            <person name="Chen Z."/>
            <person name="Yassour M."/>
            <person name="Thompson D.A."/>
            <person name="Haas B.J."/>
            <person name="Habib N."/>
            <person name="Wapinski I."/>
            <person name="Roy S."/>
            <person name="Lin M.F."/>
            <person name="Heiman D.I."/>
            <person name="Young S.K."/>
            <person name="Furuya K."/>
            <person name="Guo Y."/>
            <person name="Pidoux A."/>
            <person name="Chen H.M."/>
            <person name="Robbertse B."/>
            <person name="Goldberg J.M."/>
            <person name="Aoki K."/>
            <person name="Bayne E.H."/>
            <person name="Berlin A.M."/>
            <person name="Desjardins C.A."/>
            <person name="Dobbs E."/>
            <person name="Dukaj L."/>
            <person name="Fan L."/>
            <person name="FitzGerald M.G."/>
            <person name="French C."/>
            <person name="Gujja S."/>
            <person name="Hansen K."/>
            <person name="Keifenheim D."/>
            <person name="Levin J.Z."/>
            <person name="Mosher R.A."/>
            <person name="Mueller C.A."/>
            <person name="Pfiffner J."/>
            <person name="Priest M."/>
            <person name="Russ C."/>
            <person name="Smialowska A."/>
            <person name="Swoboda P."/>
            <person name="Sykes S.M."/>
            <person name="Vaughn M."/>
            <person name="Vengrova S."/>
            <person name="Yoder R."/>
            <person name="Zeng Q."/>
            <person name="Allshire R."/>
            <person name="Baulcombe D."/>
            <person name="Birren B.W."/>
            <person name="Brown W."/>
            <person name="Ekwall K."/>
            <person name="Kellis M."/>
            <person name="Leatherwood J."/>
            <person name="Levin H."/>
            <person name="Margalit H."/>
            <person name="Martienssen R."/>
            <person name="Nieduszynski C.A."/>
            <person name="Spatafora J.W."/>
            <person name="Friedman N."/>
            <person name="Dalgaard J.Z."/>
            <person name="Baumann P."/>
            <person name="Niki H."/>
            <person name="Regev A."/>
            <person name="Nusbaum C."/>
        </authorList>
    </citation>
    <scope>REVISION OF GENE MODEL</scope>
</reference>
<reference key="3">
    <citation type="journal article" date="2006" name="Nat. Biotechnol.">
        <title>ORFeome cloning and global analysis of protein localization in the fission yeast Schizosaccharomyces pombe.</title>
        <authorList>
            <person name="Matsuyama A."/>
            <person name="Arai R."/>
            <person name="Yashiroda Y."/>
            <person name="Shirai A."/>
            <person name="Kamata A."/>
            <person name="Sekido S."/>
            <person name="Kobayashi Y."/>
            <person name="Hashimoto A."/>
            <person name="Hamamoto M."/>
            <person name="Hiraoka Y."/>
            <person name="Horinouchi S."/>
            <person name="Yoshida M."/>
        </authorList>
    </citation>
    <scope>SUBCELLULAR LOCATION [LARGE SCALE ANALYSIS]</scope>
</reference>
<reference key="4">
    <citation type="journal article" date="2011" name="Mol. Cell">
        <title>Yeast SREBP cleavage activation requires the Golgi Dsc E3 ligase complex.</title>
        <authorList>
            <person name="Stewart E.V."/>
            <person name="Nwosu C.C."/>
            <person name="Tong Z."/>
            <person name="Roguev A."/>
            <person name="Cummins T.D."/>
            <person name="Kim D.U."/>
            <person name="Hayles J."/>
            <person name="Park H.O."/>
            <person name="Hoe K.L."/>
            <person name="Powell D.W."/>
            <person name="Krogan N.J."/>
            <person name="Espenshade P.J."/>
        </authorList>
    </citation>
    <scope>FUNCTION</scope>
    <scope>IDENTIFICATION IN THE DCS COMPLEX</scope>
    <scope>SUBCELLULAR LOCATION</scope>
</reference>
<reference key="5">
    <citation type="journal article" date="2016" name="EMBO J.">
        <title>A Golgi rhomboid protease Rbd2 recruits Cdc48 to cleave yeast SREBP.</title>
        <authorList>
            <person name="Hwang J."/>
            <person name="Ribbens D."/>
            <person name="Raychaudhuri S."/>
            <person name="Cairns L."/>
            <person name="Gu H."/>
            <person name="Frost A."/>
            <person name="Urban S."/>
            <person name="Espenshade P.J."/>
        </authorList>
    </citation>
    <scope>FUNCTION</scope>
    <scope>DISRUPTION PHENOTYPE</scope>
    <scope>MUTAGENESIS OF CYS-634</scope>
</reference>
<sequence>MDRRRWVPSTPVVTLLLLFMLFAPAPRLPSRNGESSEKSIKAEKRAFSEIKNATFLNIPERVEHSLTFPTEIWETRDGLFEEPVGKGDSHLNHTSVMTGNWNILPYPSFGKVSPNVTWHTTLRNIVMSQSGRFSANLYEYVDGNSDGISFVLNLENNNDTSVYHMTFHGDRVKPINVFLGSTDVTPNFGGVDVIPWLLKDSPYKDAPPLDGTEYFPLLQNRSLERIETRLQDAQTVGWSPLVFEEEEVTCSAFVFLHNKNTGLDKETLKAIENEFYHPQGVSTQKMPEVFVSGLVYSPDCNVAFTFSNTKGPRNFVLENHLVRFSSLYIFIVLSQIFVLLRQMRINSPSHVQRLSFLTIAMQAGLDAYIAIFFLSTNAVIEKGYLPFVSVAFLSLVPSVMFTMRYLALILRVQNSNMPPPAPRPVTNNSSNNNTNQSNASNENSPNAPSAANDNTETTTVNPPQEDDQPMTQHERDQRDWSAVCLRFYFIILVVCIASLYSAFWPVIYRFYFISALIFTSYSFWIPQIIQNVKQGTSRSFTWTYILGASVLRLYLPLAIFIDSELILGFPPKYFFALGLVLWMLFQVLVLLVQDTLGPRFFLPKKFFLSSPVYDYHPVIQQDDLEAFMRDANVCPICMQPIELVSTGSTLNPASMMVRRNYMLTPCHHLYHRQCLLQWMETRSICPVCRCHLPAV</sequence>
<protein>
    <recommendedName>
        <fullName>DSC E3 ubiquitin ligase complex subunit 1</fullName>
        <ecNumber evidence="6">2.3.2.27</ecNumber>
    </recommendedName>
    <alternativeName>
        <fullName>Defective for SREBP cleavage protein 1</fullName>
    </alternativeName>
    <alternativeName>
        <fullName evidence="6">RING-type E3 ubiquitin transferase DSC1</fullName>
    </alternativeName>
</protein>
<name>DSC1_SCHPO</name>
<evidence type="ECO:0000255" key="1"/>
<evidence type="ECO:0000255" key="2">
    <source>
        <dbReference type="PROSITE-ProRule" id="PRU00175"/>
    </source>
</evidence>
<evidence type="ECO:0000256" key="3">
    <source>
        <dbReference type="SAM" id="MobiDB-lite"/>
    </source>
</evidence>
<evidence type="ECO:0000269" key="4">
    <source>
    </source>
</evidence>
<evidence type="ECO:0000269" key="5">
    <source>
    </source>
</evidence>
<evidence type="ECO:0000305" key="6"/>
<proteinExistence type="evidence at protein level"/>